<dbReference type="EC" id="1.2.1.38" evidence="1"/>
<dbReference type="EMBL" id="CP001338">
    <property type="protein sequence ID" value="ACL17914.1"/>
    <property type="molecule type" value="Genomic_DNA"/>
</dbReference>
<dbReference type="RefSeq" id="WP_012619233.1">
    <property type="nucleotide sequence ID" value="NC_011832.1"/>
</dbReference>
<dbReference type="SMR" id="B8GFN1"/>
<dbReference type="STRING" id="521011.Mpal_2650"/>
<dbReference type="GeneID" id="7272472"/>
<dbReference type="KEGG" id="mpl:Mpal_2650"/>
<dbReference type="eggNOG" id="arCOG00495">
    <property type="taxonomic scope" value="Archaea"/>
</dbReference>
<dbReference type="HOGENOM" id="CLU_006384_0_1_2"/>
<dbReference type="OrthoDB" id="372053at2157"/>
<dbReference type="UniPathway" id="UPA00068">
    <property type="reaction ID" value="UER00108"/>
</dbReference>
<dbReference type="Proteomes" id="UP000002457">
    <property type="component" value="Chromosome"/>
</dbReference>
<dbReference type="GO" id="GO:0005737">
    <property type="term" value="C:cytoplasm"/>
    <property type="evidence" value="ECO:0007669"/>
    <property type="project" value="UniProtKB-SubCell"/>
</dbReference>
<dbReference type="GO" id="GO:0003942">
    <property type="term" value="F:N-acetyl-gamma-glutamyl-phosphate reductase activity"/>
    <property type="evidence" value="ECO:0007669"/>
    <property type="project" value="UniProtKB-UniRule"/>
</dbReference>
<dbReference type="GO" id="GO:0051287">
    <property type="term" value="F:NAD binding"/>
    <property type="evidence" value="ECO:0007669"/>
    <property type="project" value="InterPro"/>
</dbReference>
<dbReference type="GO" id="GO:0070401">
    <property type="term" value="F:NADP+ binding"/>
    <property type="evidence" value="ECO:0007669"/>
    <property type="project" value="InterPro"/>
</dbReference>
<dbReference type="GO" id="GO:0006526">
    <property type="term" value="P:L-arginine biosynthetic process"/>
    <property type="evidence" value="ECO:0007669"/>
    <property type="project" value="UniProtKB-UniRule"/>
</dbReference>
<dbReference type="CDD" id="cd23934">
    <property type="entry name" value="AGPR_1_C"/>
    <property type="match status" value="1"/>
</dbReference>
<dbReference type="CDD" id="cd17895">
    <property type="entry name" value="AGPR_1_N"/>
    <property type="match status" value="1"/>
</dbReference>
<dbReference type="Gene3D" id="3.30.360.10">
    <property type="entry name" value="Dihydrodipicolinate Reductase, domain 2"/>
    <property type="match status" value="1"/>
</dbReference>
<dbReference type="Gene3D" id="3.40.50.720">
    <property type="entry name" value="NAD(P)-binding Rossmann-like Domain"/>
    <property type="match status" value="1"/>
</dbReference>
<dbReference type="HAMAP" id="MF_00150">
    <property type="entry name" value="ArgC_type1"/>
    <property type="match status" value="1"/>
</dbReference>
<dbReference type="InterPro" id="IPR023013">
    <property type="entry name" value="AGPR_AS"/>
</dbReference>
<dbReference type="InterPro" id="IPR000706">
    <property type="entry name" value="AGPR_type-1"/>
</dbReference>
<dbReference type="InterPro" id="IPR036291">
    <property type="entry name" value="NAD(P)-bd_dom_sf"/>
</dbReference>
<dbReference type="InterPro" id="IPR050085">
    <property type="entry name" value="NAGSA_dehydrogenase"/>
</dbReference>
<dbReference type="InterPro" id="IPR000534">
    <property type="entry name" value="Semialdehyde_DH_NAD-bd"/>
</dbReference>
<dbReference type="NCBIfam" id="TIGR01850">
    <property type="entry name" value="argC"/>
    <property type="match status" value="1"/>
</dbReference>
<dbReference type="PANTHER" id="PTHR32338:SF10">
    <property type="entry name" value="N-ACETYL-GAMMA-GLUTAMYL-PHOSPHATE REDUCTASE, CHLOROPLASTIC-RELATED"/>
    <property type="match status" value="1"/>
</dbReference>
<dbReference type="PANTHER" id="PTHR32338">
    <property type="entry name" value="N-ACETYL-GAMMA-GLUTAMYL-PHOSPHATE REDUCTASE, CHLOROPLASTIC-RELATED-RELATED"/>
    <property type="match status" value="1"/>
</dbReference>
<dbReference type="Pfam" id="PF01118">
    <property type="entry name" value="Semialdhyde_dh"/>
    <property type="match status" value="1"/>
</dbReference>
<dbReference type="Pfam" id="PF22698">
    <property type="entry name" value="Semialdhyde_dhC_1"/>
    <property type="match status" value="1"/>
</dbReference>
<dbReference type="SMART" id="SM00859">
    <property type="entry name" value="Semialdhyde_dh"/>
    <property type="match status" value="1"/>
</dbReference>
<dbReference type="SUPFAM" id="SSF55347">
    <property type="entry name" value="Glyceraldehyde-3-phosphate dehydrogenase-like, C-terminal domain"/>
    <property type="match status" value="1"/>
</dbReference>
<dbReference type="SUPFAM" id="SSF51735">
    <property type="entry name" value="NAD(P)-binding Rossmann-fold domains"/>
    <property type="match status" value="1"/>
</dbReference>
<dbReference type="PROSITE" id="PS01224">
    <property type="entry name" value="ARGC"/>
    <property type="match status" value="1"/>
</dbReference>
<feature type="chain" id="PRO_1000123246" description="N-acetyl-gamma-glutamyl-phosphate reductase">
    <location>
        <begin position="1"/>
        <end position="328"/>
    </location>
</feature>
<feature type="active site" evidence="1">
    <location>
        <position position="143"/>
    </location>
</feature>
<comment type="function">
    <text evidence="1">Catalyzes the NADPH-dependent reduction of N-acetyl-5-glutamyl phosphate to yield N-acetyl-L-glutamate 5-semialdehyde.</text>
</comment>
<comment type="catalytic activity">
    <reaction evidence="1">
        <text>N-acetyl-L-glutamate 5-semialdehyde + phosphate + NADP(+) = N-acetyl-L-glutamyl 5-phosphate + NADPH + H(+)</text>
        <dbReference type="Rhea" id="RHEA:21588"/>
        <dbReference type="ChEBI" id="CHEBI:15378"/>
        <dbReference type="ChEBI" id="CHEBI:29123"/>
        <dbReference type="ChEBI" id="CHEBI:43474"/>
        <dbReference type="ChEBI" id="CHEBI:57783"/>
        <dbReference type="ChEBI" id="CHEBI:57936"/>
        <dbReference type="ChEBI" id="CHEBI:58349"/>
        <dbReference type="EC" id="1.2.1.38"/>
    </reaction>
</comment>
<comment type="pathway">
    <text evidence="1">Amino-acid biosynthesis; L-arginine biosynthesis; N(2)-acetyl-L-ornithine from L-glutamate: step 3/4.</text>
</comment>
<comment type="subcellular location">
    <subcellularLocation>
        <location evidence="1">Cytoplasm</location>
    </subcellularLocation>
</comment>
<comment type="similarity">
    <text evidence="1">Belongs to the NAGSA dehydrogenase family. Type 1 subfamily.</text>
</comment>
<name>ARGC_METPE</name>
<accession>B8GFN1</accession>
<organism>
    <name type="scientific">Methanosphaerula palustris (strain ATCC BAA-1556 / DSM 19958 / E1-9c)</name>
    <dbReference type="NCBI Taxonomy" id="521011"/>
    <lineage>
        <taxon>Archaea</taxon>
        <taxon>Methanobacteriati</taxon>
        <taxon>Methanobacteriota</taxon>
        <taxon>Stenosarchaea group</taxon>
        <taxon>Methanomicrobia</taxon>
        <taxon>Methanomicrobiales</taxon>
        <taxon>Methanoregulaceae</taxon>
        <taxon>Methanosphaerula</taxon>
    </lineage>
</organism>
<proteinExistence type="inferred from homology"/>
<protein>
    <recommendedName>
        <fullName evidence="1">N-acetyl-gamma-glutamyl-phosphate reductase</fullName>
        <shortName evidence="1">AGPR</shortName>
        <ecNumber evidence="1">1.2.1.38</ecNumber>
    </recommendedName>
    <alternativeName>
        <fullName evidence="1">N-acetyl-glutamate semialdehyde dehydrogenase</fullName>
        <shortName evidence="1">NAGSA dehydrogenase</shortName>
    </alternativeName>
</protein>
<keyword id="KW-0028">Amino-acid biosynthesis</keyword>
<keyword id="KW-0055">Arginine biosynthesis</keyword>
<keyword id="KW-0963">Cytoplasm</keyword>
<keyword id="KW-0521">NADP</keyword>
<keyword id="KW-0560">Oxidoreductase</keyword>
<keyword id="KW-1185">Reference proteome</keyword>
<sequence>MDIAIIGATGYAGGELIRLLGMHSAAEVVCATSRRVEGTRVSAVHPQLNGFTDLSFTNPSVDEIEADVAFLAVPHTAGMQYVRALLERGIRVVDLSADYRLPQEIFEKVYGVTHTDYFAAPYGLPELHREEIRGKHFIANPGCFPTGATLAAAPLAAFADTIIYDSKSGVSGAGDNPSATTHFPNVADAITPYKMTTHRHLAEMKMELERLHAKAACYFTPHLLPVNRGILTTAHILLRDPLNQDQVERIYKDYYKDESFVRYQKPSIAAVRGSNFCDLIVESEGKRVVAVSAIDNLVKGASGQAIQNMNLMCGFKENDGLASAGLFP</sequence>
<reference key="1">
    <citation type="journal article" date="2015" name="Genome Announc.">
        <title>Complete Genome Sequence of Methanosphaerula palustris E1-9CT, a Hydrogenotrophic Methanogen Isolated from a Minerotrophic Fen Peatland.</title>
        <authorList>
            <person name="Cadillo-Quiroz H."/>
            <person name="Browne P."/>
            <person name="Kyrpides N."/>
            <person name="Woyke T."/>
            <person name="Goodwin L."/>
            <person name="Detter C."/>
            <person name="Yavitt J.B."/>
            <person name="Zinder S.H."/>
        </authorList>
    </citation>
    <scope>NUCLEOTIDE SEQUENCE [LARGE SCALE GENOMIC DNA]</scope>
    <source>
        <strain>ATCC BAA-1556 / DSM 19958 / E1-9c</strain>
    </source>
</reference>
<evidence type="ECO:0000255" key="1">
    <source>
        <dbReference type="HAMAP-Rule" id="MF_00150"/>
    </source>
</evidence>
<gene>
    <name evidence="1" type="primary">argC</name>
    <name type="ordered locus">Mpal_2650</name>
</gene>